<evidence type="ECO:0000255" key="1"/>
<keyword id="KW-0732">Signal</keyword>
<organism>
    <name type="scientific">Canine coronavirus (strain BGF10)</name>
    <name type="common">CCoV</name>
    <name type="synonym">Canine enteric coronavirus</name>
    <dbReference type="NCBI Taxonomy" id="441619"/>
    <lineage>
        <taxon>Viruses</taxon>
        <taxon>Riboviria</taxon>
        <taxon>Orthornavirae</taxon>
        <taxon>Pisuviricota</taxon>
        <taxon>Pisoniviricetes</taxon>
        <taxon>Nidovirales</taxon>
        <taxon>Cornidovirineae</taxon>
        <taxon>Coronaviridae</taxon>
        <taxon>Orthocoronavirinae</taxon>
        <taxon>Alphacoronavirus</taxon>
        <taxon>Tegacovirus</taxon>
        <taxon>Alphacoronavirus 1</taxon>
    </lineage>
</organism>
<name>NS7B_CVCBG</name>
<dbReference type="EMBL" id="AY342160">
    <property type="protein sequence ID" value="AAQ17227.1"/>
    <property type="molecule type" value="Genomic_RNA"/>
</dbReference>
<dbReference type="InterPro" id="IPR004945">
    <property type="entry name" value="Corona_6B_7B"/>
</dbReference>
<dbReference type="Pfam" id="PF03262">
    <property type="entry name" value="Corona_6B_7B"/>
    <property type="match status" value="1"/>
</dbReference>
<feature type="signal peptide" evidence="1">
    <location>
        <begin position="1"/>
        <end position="15"/>
    </location>
</feature>
<feature type="chain" id="PRO_0000289893" description="Non-structural protein 7b">
    <location>
        <begin position="16"/>
        <end position="213"/>
    </location>
</feature>
<gene>
    <name type="ORF">7b</name>
</gene>
<accession>Q7T6S6</accession>
<reference key="1">
    <citation type="journal article" date="2004" name="Virus Res.">
        <title>Molecular characterization of a virulent canine coronavirus BGF strain.</title>
        <authorList>
            <person name="Sanchez-Morgado J.M."/>
            <person name="Poynter S."/>
            <person name="Morris T.H."/>
        </authorList>
    </citation>
    <scope>NUCLEOTIDE SEQUENCE [GENOMIC RNA]</scope>
</reference>
<protein>
    <recommendedName>
        <fullName>Non-structural protein 7b</fullName>
        <shortName>ns7b</shortName>
    </recommendedName>
    <alternativeName>
        <fullName>Accessory protein 7b</fullName>
    </alternativeName>
</protein>
<organismHost>
    <name type="scientific">Canis lupus familiaris</name>
    <name type="common">Dog</name>
    <name type="synonym">Canis familiaris</name>
    <dbReference type="NCBI Taxonomy" id="9615"/>
</organismHost>
<proteinExistence type="inferred from homology"/>
<sequence length="213" mass="24882">MKFLIIVLCLSLVNGYGIKRNVQEHDLKDPHEHPTMTWEILERFVGNTLYITTPQVLSLPLGAEVRCDDIEGFSCSWPGYKDYAHDHIDFHFNPSNPFYSFVDTFYVSLGDRVDKIYLRVISATSREKMLNVGCHTSFSVNLPIGIQIYHDKDMKLLVEGRHLECAHRVYFVKYCPYHAHGYCFDDKLKVYDLKRIKSRKAFEKVSQHQKSEL</sequence>